<name>AROA_SALA4</name>
<dbReference type="EC" id="2.5.1.19" evidence="1"/>
<dbReference type="EMBL" id="CP001138">
    <property type="protein sequence ID" value="ACH51017.1"/>
    <property type="molecule type" value="Genomic_DNA"/>
</dbReference>
<dbReference type="RefSeq" id="WP_000445179.1">
    <property type="nucleotide sequence ID" value="NC_011149.1"/>
</dbReference>
<dbReference type="SMR" id="B5F161"/>
<dbReference type="KEGG" id="sea:SeAg_B0983"/>
<dbReference type="HOGENOM" id="CLU_024321_0_0_6"/>
<dbReference type="UniPathway" id="UPA00053">
    <property type="reaction ID" value="UER00089"/>
</dbReference>
<dbReference type="Proteomes" id="UP000008819">
    <property type="component" value="Chromosome"/>
</dbReference>
<dbReference type="GO" id="GO:0005737">
    <property type="term" value="C:cytoplasm"/>
    <property type="evidence" value="ECO:0007669"/>
    <property type="project" value="UniProtKB-SubCell"/>
</dbReference>
<dbReference type="GO" id="GO:0003866">
    <property type="term" value="F:3-phosphoshikimate 1-carboxyvinyltransferase activity"/>
    <property type="evidence" value="ECO:0007669"/>
    <property type="project" value="UniProtKB-UniRule"/>
</dbReference>
<dbReference type="GO" id="GO:0008652">
    <property type="term" value="P:amino acid biosynthetic process"/>
    <property type="evidence" value="ECO:0007669"/>
    <property type="project" value="UniProtKB-KW"/>
</dbReference>
<dbReference type="GO" id="GO:0009073">
    <property type="term" value="P:aromatic amino acid family biosynthetic process"/>
    <property type="evidence" value="ECO:0007669"/>
    <property type="project" value="UniProtKB-KW"/>
</dbReference>
<dbReference type="GO" id="GO:0009423">
    <property type="term" value="P:chorismate biosynthetic process"/>
    <property type="evidence" value="ECO:0007669"/>
    <property type="project" value="UniProtKB-UniRule"/>
</dbReference>
<dbReference type="FunFam" id="3.65.10.10:FF:000003">
    <property type="entry name" value="3-phosphoshikimate 1-carboxyvinyltransferase"/>
    <property type="match status" value="1"/>
</dbReference>
<dbReference type="FunFam" id="3.65.10.10:FF:000004">
    <property type="entry name" value="3-phosphoshikimate 1-carboxyvinyltransferase"/>
    <property type="match status" value="1"/>
</dbReference>
<dbReference type="Gene3D" id="3.65.10.10">
    <property type="entry name" value="Enolpyruvate transferase domain"/>
    <property type="match status" value="2"/>
</dbReference>
<dbReference type="HAMAP" id="MF_00210">
    <property type="entry name" value="EPSP_synth"/>
    <property type="match status" value="1"/>
</dbReference>
<dbReference type="InterPro" id="IPR001986">
    <property type="entry name" value="Enolpyruvate_Tfrase_dom"/>
</dbReference>
<dbReference type="InterPro" id="IPR036968">
    <property type="entry name" value="Enolpyruvate_Tfrase_sf"/>
</dbReference>
<dbReference type="InterPro" id="IPR006264">
    <property type="entry name" value="EPSP_synthase"/>
</dbReference>
<dbReference type="InterPro" id="IPR023193">
    <property type="entry name" value="EPSP_synthase_CS"/>
</dbReference>
<dbReference type="InterPro" id="IPR013792">
    <property type="entry name" value="RNA3'P_cycl/enolpyr_Trfase_a/b"/>
</dbReference>
<dbReference type="NCBIfam" id="TIGR01356">
    <property type="entry name" value="aroA"/>
    <property type="match status" value="1"/>
</dbReference>
<dbReference type="PANTHER" id="PTHR21090">
    <property type="entry name" value="AROM/DEHYDROQUINATE SYNTHASE"/>
    <property type="match status" value="1"/>
</dbReference>
<dbReference type="PANTHER" id="PTHR21090:SF5">
    <property type="entry name" value="PENTAFUNCTIONAL AROM POLYPEPTIDE"/>
    <property type="match status" value="1"/>
</dbReference>
<dbReference type="Pfam" id="PF00275">
    <property type="entry name" value="EPSP_synthase"/>
    <property type="match status" value="1"/>
</dbReference>
<dbReference type="PIRSF" id="PIRSF000505">
    <property type="entry name" value="EPSPS"/>
    <property type="match status" value="1"/>
</dbReference>
<dbReference type="SUPFAM" id="SSF55205">
    <property type="entry name" value="EPT/RTPC-like"/>
    <property type="match status" value="1"/>
</dbReference>
<dbReference type="PROSITE" id="PS00104">
    <property type="entry name" value="EPSP_SYNTHASE_1"/>
    <property type="match status" value="1"/>
</dbReference>
<dbReference type="PROSITE" id="PS00885">
    <property type="entry name" value="EPSP_SYNTHASE_2"/>
    <property type="match status" value="1"/>
</dbReference>
<proteinExistence type="inferred from homology"/>
<gene>
    <name evidence="1" type="primary">aroA</name>
    <name type="ordered locus">SeAg_B0983</name>
</gene>
<accession>B5F161</accession>
<reference key="1">
    <citation type="journal article" date="2011" name="J. Bacteriol.">
        <title>Comparative genomics of 28 Salmonella enterica isolates: evidence for CRISPR-mediated adaptive sublineage evolution.</title>
        <authorList>
            <person name="Fricke W.F."/>
            <person name="Mammel M.K."/>
            <person name="McDermott P.F."/>
            <person name="Tartera C."/>
            <person name="White D.G."/>
            <person name="Leclerc J.E."/>
            <person name="Ravel J."/>
            <person name="Cebula T.A."/>
        </authorList>
    </citation>
    <scope>NUCLEOTIDE SEQUENCE [LARGE SCALE GENOMIC DNA]</scope>
    <source>
        <strain>SL483</strain>
    </source>
</reference>
<feature type="chain" id="PRO_1000099744" description="3-phosphoshikimate 1-carboxyvinyltransferase">
    <location>
        <begin position="1"/>
        <end position="427"/>
    </location>
</feature>
<feature type="active site" description="Proton acceptor" evidence="1">
    <location>
        <position position="313"/>
    </location>
</feature>
<feature type="binding site" evidence="1">
    <location>
        <position position="22"/>
    </location>
    <ligand>
        <name>3-phosphoshikimate</name>
        <dbReference type="ChEBI" id="CHEBI:145989"/>
    </ligand>
</feature>
<feature type="binding site" evidence="1">
    <location>
        <position position="22"/>
    </location>
    <ligand>
        <name>phosphoenolpyruvate</name>
        <dbReference type="ChEBI" id="CHEBI:58702"/>
    </ligand>
</feature>
<feature type="binding site" evidence="1">
    <location>
        <position position="23"/>
    </location>
    <ligand>
        <name>3-phosphoshikimate</name>
        <dbReference type="ChEBI" id="CHEBI:145989"/>
    </ligand>
</feature>
<feature type="binding site" evidence="1">
    <location>
        <position position="27"/>
    </location>
    <ligand>
        <name>3-phosphoshikimate</name>
        <dbReference type="ChEBI" id="CHEBI:145989"/>
    </ligand>
</feature>
<feature type="binding site" evidence="1">
    <location>
        <position position="96"/>
    </location>
    <ligand>
        <name>phosphoenolpyruvate</name>
        <dbReference type="ChEBI" id="CHEBI:58702"/>
    </ligand>
</feature>
<feature type="binding site" evidence="1">
    <location>
        <position position="124"/>
    </location>
    <ligand>
        <name>phosphoenolpyruvate</name>
        <dbReference type="ChEBI" id="CHEBI:58702"/>
    </ligand>
</feature>
<feature type="binding site" evidence="1">
    <location>
        <position position="169"/>
    </location>
    <ligand>
        <name>3-phosphoshikimate</name>
        <dbReference type="ChEBI" id="CHEBI:145989"/>
    </ligand>
</feature>
<feature type="binding site" evidence="1">
    <location>
        <position position="170"/>
    </location>
    <ligand>
        <name>3-phosphoshikimate</name>
        <dbReference type="ChEBI" id="CHEBI:145989"/>
    </ligand>
</feature>
<feature type="binding site" evidence="1">
    <location>
        <position position="171"/>
    </location>
    <ligand>
        <name>3-phosphoshikimate</name>
        <dbReference type="ChEBI" id="CHEBI:145989"/>
    </ligand>
</feature>
<feature type="binding site" evidence="1">
    <location>
        <position position="171"/>
    </location>
    <ligand>
        <name>phosphoenolpyruvate</name>
        <dbReference type="ChEBI" id="CHEBI:58702"/>
    </ligand>
</feature>
<feature type="binding site" evidence="1">
    <location>
        <position position="197"/>
    </location>
    <ligand>
        <name>3-phosphoshikimate</name>
        <dbReference type="ChEBI" id="CHEBI:145989"/>
    </ligand>
</feature>
<feature type="binding site" evidence="1">
    <location>
        <position position="313"/>
    </location>
    <ligand>
        <name>3-phosphoshikimate</name>
        <dbReference type="ChEBI" id="CHEBI:145989"/>
    </ligand>
</feature>
<feature type="binding site" evidence="1">
    <location>
        <position position="336"/>
    </location>
    <ligand>
        <name>3-phosphoshikimate</name>
        <dbReference type="ChEBI" id="CHEBI:145989"/>
    </ligand>
</feature>
<feature type="binding site" evidence="1">
    <location>
        <position position="340"/>
    </location>
    <ligand>
        <name>3-phosphoshikimate</name>
        <dbReference type="ChEBI" id="CHEBI:145989"/>
    </ligand>
</feature>
<feature type="binding site" evidence="1">
    <location>
        <position position="344"/>
    </location>
    <ligand>
        <name>phosphoenolpyruvate</name>
        <dbReference type="ChEBI" id="CHEBI:58702"/>
    </ligand>
</feature>
<feature type="binding site" evidence="1">
    <location>
        <position position="386"/>
    </location>
    <ligand>
        <name>phosphoenolpyruvate</name>
        <dbReference type="ChEBI" id="CHEBI:58702"/>
    </ligand>
</feature>
<feature type="binding site" evidence="1">
    <location>
        <position position="411"/>
    </location>
    <ligand>
        <name>phosphoenolpyruvate</name>
        <dbReference type="ChEBI" id="CHEBI:58702"/>
    </ligand>
</feature>
<evidence type="ECO:0000255" key="1">
    <source>
        <dbReference type="HAMAP-Rule" id="MF_00210"/>
    </source>
</evidence>
<comment type="function">
    <text evidence="1">Catalyzes the transfer of the enolpyruvyl moiety of phosphoenolpyruvate (PEP) to the 5-hydroxyl of shikimate-3-phosphate (S3P) to produce enolpyruvyl shikimate-3-phosphate and inorganic phosphate.</text>
</comment>
<comment type="catalytic activity">
    <reaction evidence="1">
        <text>3-phosphoshikimate + phosphoenolpyruvate = 5-O-(1-carboxyvinyl)-3-phosphoshikimate + phosphate</text>
        <dbReference type="Rhea" id="RHEA:21256"/>
        <dbReference type="ChEBI" id="CHEBI:43474"/>
        <dbReference type="ChEBI" id="CHEBI:57701"/>
        <dbReference type="ChEBI" id="CHEBI:58702"/>
        <dbReference type="ChEBI" id="CHEBI:145989"/>
        <dbReference type="EC" id="2.5.1.19"/>
    </reaction>
    <physiologicalReaction direction="left-to-right" evidence="1">
        <dbReference type="Rhea" id="RHEA:21257"/>
    </physiologicalReaction>
</comment>
<comment type="pathway">
    <text evidence="1">Metabolic intermediate biosynthesis; chorismate biosynthesis; chorismate from D-erythrose 4-phosphate and phosphoenolpyruvate: step 6/7.</text>
</comment>
<comment type="subunit">
    <text evidence="1">Monomer.</text>
</comment>
<comment type="subcellular location">
    <subcellularLocation>
        <location evidence="1">Cytoplasm</location>
    </subcellularLocation>
</comment>
<comment type="similarity">
    <text evidence="1">Belongs to the EPSP synthase family.</text>
</comment>
<organism>
    <name type="scientific">Salmonella agona (strain SL483)</name>
    <dbReference type="NCBI Taxonomy" id="454166"/>
    <lineage>
        <taxon>Bacteria</taxon>
        <taxon>Pseudomonadati</taxon>
        <taxon>Pseudomonadota</taxon>
        <taxon>Gammaproteobacteria</taxon>
        <taxon>Enterobacterales</taxon>
        <taxon>Enterobacteriaceae</taxon>
        <taxon>Salmonella</taxon>
    </lineage>
</organism>
<protein>
    <recommendedName>
        <fullName evidence="1">3-phosphoshikimate 1-carboxyvinyltransferase</fullName>
        <ecNumber evidence="1">2.5.1.19</ecNumber>
    </recommendedName>
    <alternativeName>
        <fullName evidence="1">5-enolpyruvylshikimate-3-phosphate synthase</fullName>
        <shortName evidence="1">EPSP synthase</shortName>
        <shortName evidence="1">EPSPS</shortName>
    </alternativeName>
</protein>
<keyword id="KW-0028">Amino-acid biosynthesis</keyword>
<keyword id="KW-0057">Aromatic amino acid biosynthesis</keyword>
<keyword id="KW-0963">Cytoplasm</keyword>
<keyword id="KW-0808">Transferase</keyword>
<sequence>MESLTLQPIARVDGAINLPGSKSVSNRALLLAALACGKTVLMNLLDSDDVRHMLNALSALGINYTLSADRTRCDITGNGGALHAPGALELFLGNAGTAMRPLAAALCLGQNEIVLTGEPRMKERPIGHLVDSLRQGGANIDYLEQENYPPLRLRGGFTGGDIEVDGSVSSQFLTALLMTAPLAPEDTIIRVKGELVSKPYIDITLNLMKTFGVEIANHHYQQFVVKGGQKYHSPGRYLVEGDASSASYFLAAGAIKGGTVKVTGIGRKSMQGDIRFADVLEKMGATITWGDDFIACTRGELHAIDMDMNHIPDAAMTIATTALFAKGTTTLRNIYNWRVKETDRLFAMATELRKVGAEVEEGHDYIRITPPAKLQHADIGTYNDHRMAMCFSLVALSDTPVTILDPKCTAKTFPDYFEQLARMSTPA</sequence>